<keyword id="KW-0903">Direct protein sequencing</keyword>
<keyword id="KW-1185">Reference proteome</keyword>
<reference evidence="3" key="1">
    <citation type="thesis" date="2006" institute="ICAT-FCUL" country="Portugal">
        <title>Molecular analysis of Populus euphratica Oliv. response to moderate heat stress.</title>
        <authorList>
            <person name="Ferreira S."/>
        </authorList>
    </citation>
    <scope>PROTEIN SEQUENCE</scope>
    <source>
        <tissue evidence="1">Leaf</tissue>
    </source>
</reference>
<evidence type="ECO:0000269" key="1">
    <source ref="1"/>
</evidence>
<evidence type="ECO:0000303" key="2">
    <source ref="1"/>
</evidence>
<evidence type="ECO:0000305" key="3"/>
<accession>P84974</accession>
<sequence length="17" mass="1791">IEMAEGGNDNIGNESIK</sequence>
<proteinExistence type="evidence at protein level"/>
<name>JMJC_POPEU</name>
<feature type="chain" id="PRO_0000307114" description="Transcription factor jumonji domain-containing protein">
    <location>
        <begin position="1" status="less than"/>
        <end position="17" status="greater than"/>
    </location>
</feature>
<feature type="non-terminal residue" evidence="2">
    <location>
        <position position="1"/>
    </location>
</feature>
<feature type="non-terminal residue" evidence="2">
    <location>
        <position position="17"/>
    </location>
</feature>
<protein>
    <recommendedName>
        <fullName>Transcription factor jumonji domain-containing protein</fullName>
    </recommendedName>
</protein>
<organism>
    <name type="scientific">Populus euphratica</name>
    <name type="common">Euphrates poplar</name>
    <dbReference type="NCBI Taxonomy" id="75702"/>
    <lineage>
        <taxon>Eukaryota</taxon>
        <taxon>Viridiplantae</taxon>
        <taxon>Streptophyta</taxon>
        <taxon>Embryophyta</taxon>
        <taxon>Tracheophyta</taxon>
        <taxon>Spermatophyta</taxon>
        <taxon>Magnoliopsida</taxon>
        <taxon>eudicotyledons</taxon>
        <taxon>Gunneridae</taxon>
        <taxon>Pentapetalae</taxon>
        <taxon>rosids</taxon>
        <taxon>fabids</taxon>
        <taxon>Malpighiales</taxon>
        <taxon>Salicaceae</taxon>
        <taxon>Saliceae</taxon>
        <taxon>Populus</taxon>
    </lineage>
</organism>
<dbReference type="Proteomes" id="UP000694918">
    <property type="component" value="Unplaced"/>
</dbReference>